<keyword id="KW-0238">DNA-binding</keyword>
<keyword id="KW-0539">Nucleus</keyword>
<keyword id="KW-1185">Reference proteome</keyword>
<keyword id="KW-0678">Repressor</keyword>
<keyword id="KW-0804">Transcription</keyword>
<keyword id="KW-0805">Transcription regulation</keyword>
<keyword id="KW-0832">Ubl conjugation</keyword>
<keyword id="KW-0879">Wnt signaling pathway</keyword>
<organism>
    <name type="scientific">Pongo abelii</name>
    <name type="common">Sumatran orangutan</name>
    <name type="synonym">Pongo pygmaeus abelii</name>
    <dbReference type="NCBI Taxonomy" id="9601"/>
    <lineage>
        <taxon>Eukaryota</taxon>
        <taxon>Metazoa</taxon>
        <taxon>Chordata</taxon>
        <taxon>Craniata</taxon>
        <taxon>Vertebrata</taxon>
        <taxon>Euteleostomi</taxon>
        <taxon>Mammalia</taxon>
        <taxon>Eutheria</taxon>
        <taxon>Euarchontoglires</taxon>
        <taxon>Primates</taxon>
        <taxon>Haplorrhini</taxon>
        <taxon>Catarrhini</taxon>
        <taxon>Hominidae</taxon>
        <taxon>Pongo</taxon>
    </lineage>
</organism>
<proteinExistence type="evidence at transcript level"/>
<reference key="1">
    <citation type="submission" date="2004-11" db="EMBL/GenBank/DDBJ databases">
        <authorList>
            <consortium name="The German cDNA consortium"/>
        </authorList>
    </citation>
    <scope>NUCLEOTIDE SEQUENCE [LARGE SCALE MRNA]</scope>
    <source>
        <tissue>Kidney</tissue>
    </source>
</reference>
<accession>Q5R7I3</accession>
<dbReference type="EMBL" id="CR860133">
    <property type="protein sequence ID" value="CAH92277.1"/>
    <property type="status" value="ALT_INIT"/>
    <property type="molecule type" value="mRNA"/>
</dbReference>
<dbReference type="RefSeq" id="NP_001126331.1">
    <property type="nucleotide sequence ID" value="NM_001132859.1"/>
</dbReference>
<dbReference type="SMR" id="Q5R7I3"/>
<dbReference type="STRING" id="9601.ENSPPYP00000020062"/>
<dbReference type="GeneID" id="100173312"/>
<dbReference type="KEGG" id="pon:100173312"/>
<dbReference type="CTD" id="26959"/>
<dbReference type="eggNOG" id="ENOG502QR1P">
    <property type="taxonomic scope" value="Eukaryota"/>
</dbReference>
<dbReference type="InParanoid" id="Q5R7I3"/>
<dbReference type="OrthoDB" id="1919336at2759"/>
<dbReference type="Proteomes" id="UP000001595">
    <property type="component" value="Unplaced"/>
</dbReference>
<dbReference type="GO" id="GO:0005634">
    <property type="term" value="C:nucleus"/>
    <property type="evidence" value="ECO:0007669"/>
    <property type="project" value="UniProtKB-SubCell"/>
</dbReference>
<dbReference type="GO" id="GO:0000981">
    <property type="term" value="F:DNA-binding transcription factor activity, RNA polymerase II-specific"/>
    <property type="evidence" value="ECO:0007669"/>
    <property type="project" value="TreeGrafter"/>
</dbReference>
<dbReference type="GO" id="GO:0003723">
    <property type="term" value="F:RNA binding"/>
    <property type="evidence" value="ECO:0007669"/>
    <property type="project" value="InterPro"/>
</dbReference>
<dbReference type="GO" id="GO:0000978">
    <property type="term" value="F:RNA polymerase II cis-regulatory region sequence-specific DNA binding"/>
    <property type="evidence" value="ECO:0007669"/>
    <property type="project" value="TreeGrafter"/>
</dbReference>
<dbReference type="GO" id="GO:0016055">
    <property type="term" value="P:Wnt signaling pathway"/>
    <property type="evidence" value="ECO:0007669"/>
    <property type="project" value="UniProtKB-KW"/>
</dbReference>
<dbReference type="CDD" id="cd21988">
    <property type="entry name" value="HMG-box_HBP1"/>
    <property type="match status" value="1"/>
</dbReference>
<dbReference type="FunFam" id="1.10.30.10:FF:000020">
    <property type="entry name" value="HMG box-containing protein 1"/>
    <property type="match status" value="1"/>
</dbReference>
<dbReference type="Gene3D" id="1.10.30.10">
    <property type="entry name" value="High mobility group box domain"/>
    <property type="match status" value="1"/>
</dbReference>
<dbReference type="InterPro" id="IPR003652">
    <property type="entry name" value="Ataxin_AXH_dom"/>
</dbReference>
<dbReference type="InterPro" id="IPR036096">
    <property type="entry name" value="Ataxin_AXH_dom_sf"/>
</dbReference>
<dbReference type="InterPro" id="IPR039655">
    <property type="entry name" value="HBP1"/>
</dbReference>
<dbReference type="InterPro" id="IPR009071">
    <property type="entry name" value="HMG_box_dom"/>
</dbReference>
<dbReference type="InterPro" id="IPR036910">
    <property type="entry name" value="HMG_box_dom_sf"/>
</dbReference>
<dbReference type="PANTHER" id="PTHR15499">
    <property type="entry name" value="HMG BOX-CONTAINING PROTEIN 1"/>
    <property type="match status" value="1"/>
</dbReference>
<dbReference type="PANTHER" id="PTHR15499:SF3">
    <property type="entry name" value="HMG BOX-CONTAINING PROTEIN 1"/>
    <property type="match status" value="1"/>
</dbReference>
<dbReference type="Pfam" id="PF08517">
    <property type="entry name" value="AXH"/>
    <property type="match status" value="1"/>
</dbReference>
<dbReference type="Pfam" id="PF00505">
    <property type="entry name" value="HMG_box"/>
    <property type="match status" value="1"/>
</dbReference>
<dbReference type="SMART" id="SM00536">
    <property type="entry name" value="AXH"/>
    <property type="match status" value="1"/>
</dbReference>
<dbReference type="SMART" id="SM00398">
    <property type="entry name" value="HMG"/>
    <property type="match status" value="1"/>
</dbReference>
<dbReference type="SUPFAM" id="SSF102031">
    <property type="entry name" value="AXH domain"/>
    <property type="match status" value="1"/>
</dbReference>
<dbReference type="SUPFAM" id="SSF47095">
    <property type="entry name" value="HMG-box"/>
    <property type="match status" value="1"/>
</dbReference>
<dbReference type="PROSITE" id="PS51148">
    <property type="entry name" value="AXH"/>
    <property type="match status" value="1"/>
</dbReference>
<dbReference type="PROSITE" id="PS50118">
    <property type="entry name" value="HMG_BOX_2"/>
    <property type="match status" value="1"/>
</dbReference>
<sequence length="514" mass="57717">MVWEVKTNQMPNAVQKLLLVMDKRASGMNDSLELLQCNENLPSSPGYNSCDEHMELDDLPELQAVQSDPTQSGMYQLSSDVSHQEYPRSSWNQNTSDIPETTYRENEVDWLTELANIATSPQSPLMQCSFYNRSSPVHIIATSKSLHSYARPPPVSSSSKSEPAFPHHHWKEETPVRHERANSESESGIFCMSSLSDDDDLGWCNSWPSTVWHCFLKGTRLCFHKGSNKEWQDVEDFARAEGCDNEEDLQMGIHKGYGSDGLKLLSHEESVSFGESVLKLTFDPGTVEDGLLTVECKLDHPFYVKNKGWSSFYPSLTVVQHGIPCCEVHIGDVRLPPGHLDAINFDDSGVFDTFKSYDFTPMDSSAVYVLSSMARQRRASLSCGGPGGQDFARSGFSKNCGSPGSSQLSSSSLYAKAVKNHSSGTVSATSPNKCKRPMNAFMLFAKKYRVEYTQMYPGKDNRAISVILGDRWKKMKNEERRMYTLEAKALAEEQKRLNPDCWKRKRTNSSSQQH</sequence>
<gene>
    <name type="primary">HBP1</name>
</gene>
<comment type="function">
    <text evidence="1">Transcriptional repressor that binds to the promoter region of target genes. Plays a role in the regulation of the cell cycle and of the Wnt pathway. Binds preferentially to the sequence 5'-TTCATTCATTCA-3'. Binding to the histone H1.0 promoter is enhanced by interaction with RB1. Disrupts the interaction between DNA and TCF4 (By similarity).</text>
</comment>
<comment type="subunit">
    <text evidence="1 2">Binds TCF4 (By similarity). Binds RB1. Binds the second PAH repeat of SIN3A (By similarity).</text>
</comment>
<comment type="subcellular location">
    <subcellularLocation>
        <location evidence="3">Nucleus</location>
    </subcellularLocation>
</comment>
<comment type="PTM">
    <text evidence="1">Ubiquitinated by the CTLH E3 ubiquitin-protein ligase complex, leading to subsequent proteasomal degradation.</text>
</comment>
<comment type="sequence caution" evidence="6">
    <conflict type="erroneous initiation">
        <sequence resource="EMBL-CDS" id="CAH92277"/>
    </conflict>
</comment>
<name>HBP1_PONAB</name>
<evidence type="ECO:0000250" key="1">
    <source>
        <dbReference type="UniProtKB" id="O60381"/>
    </source>
</evidence>
<evidence type="ECO:0000250" key="2">
    <source>
        <dbReference type="UniProtKB" id="Q8R316"/>
    </source>
</evidence>
<evidence type="ECO:0000255" key="3">
    <source>
        <dbReference type="PROSITE-ProRule" id="PRU00267"/>
    </source>
</evidence>
<evidence type="ECO:0000255" key="4">
    <source>
        <dbReference type="PROSITE-ProRule" id="PRU00496"/>
    </source>
</evidence>
<evidence type="ECO:0000256" key="5">
    <source>
        <dbReference type="SAM" id="MobiDB-lite"/>
    </source>
</evidence>
<evidence type="ECO:0000305" key="6"/>
<feature type="chain" id="PRO_0000048548" description="HMG box-containing protein 1">
    <location>
        <begin position="1"/>
        <end position="514"/>
    </location>
</feature>
<feature type="domain" description="AXH" evidence="4">
    <location>
        <begin position="203"/>
        <end position="345"/>
    </location>
</feature>
<feature type="DNA-binding region" description="HMG box" evidence="3">
    <location>
        <begin position="434"/>
        <end position="502"/>
    </location>
</feature>
<feature type="region of interest" description="Disordered" evidence="5">
    <location>
        <begin position="150"/>
        <end position="182"/>
    </location>
</feature>
<feature type="compositionally biased region" description="Basic and acidic residues" evidence="5">
    <location>
        <begin position="170"/>
        <end position="182"/>
    </location>
</feature>
<protein>
    <recommendedName>
        <fullName>HMG box-containing protein 1</fullName>
    </recommendedName>
    <alternativeName>
        <fullName>HMG box transcription factor 1</fullName>
    </alternativeName>
    <alternativeName>
        <fullName>High mobility group box transcription factor 1</fullName>
    </alternativeName>
</protein>